<keyword id="KW-0067">ATP-binding</keyword>
<keyword id="KW-0227">DNA damage</keyword>
<keyword id="KW-0234">DNA repair</keyword>
<keyword id="KW-0238">DNA-binding</keyword>
<keyword id="KW-0547">Nucleotide-binding</keyword>
<keyword id="KW-1185">Reference proteome</keyword>
<dbReference type="EMBL" id="AE005674">
    <property type="protein sequence ID" value="AAN44243.1"/>
    <property type="molecule type" value="Genomic_DNA"/>
</dbReference>
<dbReference type="EMBL" id="AE014073">
    <property type="protein sequence ID" value="AAP18070.1"/>
    <property type="molecule type" value="Genomic_DNA"/>
</dbReference>
<dbReference type="RefSeq" id="NP_708536.1">
    <property type="nucleotide sequence ID" value="NC_004337.2"/>
</dbReference>
<dbReference type="RefSeq" id="WP_001272883.1">
    <property type="nucleotide sequence ID" value="NZ_WPGW01000179.1"/>
</dbReference>
<dbReference type="SMR" id="Q83QE9"/>
<dbReference type="STRING" id="198214.SF2752"/>
<dbReference type="PaxDb" id="198214-SF2752"/>
<dbReference type="GeneID" id="1027453"/>
<dbReference type="KEGG" id="sfl:SF2752"/>
<dbReference type="KEGG" id="sfx:S2944"/>
<dbReference type="PATRIC" id="fig|198214.7.peg.3276"/>
<dbReference type="HOGENOM" id="CLU_002472_4_0_6"/>
<dbReference type="Proteomes" id="UP000001006">
    <property type="component" value="Chromosome"/>
</dbReference>
<dbReference type="Proteomes" id="UP000002673">
    <property type="component" value="Chromosome"/>
</dbReference>
<dbReference type="GO" id="GO:0005829">
    <property type="term" value="C:cytosol"/>
    <property type="evidence" value="ECO:0007669"/>
    <property type="project" value="TreeGrafter"/>
</dbReference>
<dbReference type="GO" id="GO:0005524">
    <property type="term" value="F:ATP binding"/>
    <property type="evidence" value="ECO:0007669"/>
    <property type="project" value="UniProtKB-UniRule"/>
</dbReference>
<dbReference type="GO" id="GO:0140664">
    <property type="term" value="F:ATP-dependent DNA damage sensor activity"/>
    <property type="evidence" value="ECO:0007669"/>
    <property type="project" value="InterPro"/>
</dbReference>
<dbReference type="GO" id="GO:0003684">
    <property type="term" value="F:damaged DNA binding"/>
    <property type="evidence" value="ECO:0007669"/>
    <property type="project" value="UniProtKB-UniRule"/>
</dbReference>
<dbReference type="GO" id="GO:0030983">
    <property type="term" value="F:mismatched DNA binding"/>
    <property type="evidence" value="ECO:0007669"/>
    <property type="project" value="InterPro"/>
</dbReference>
<dbReference type="GO" id="GO:0006298">
    <property type="term" value="P:mismatch repair"/>
    <property type="evidence" value="ECO:0007669"/>
    <property type="project" value="UniProtKB-UniRule"/>
</dbReference>
<dbReference type="CDD" id="cd03284">
    <property type="entry name" value="ABC_MutS1"/>
    <property type="match status" value="1"/>
</dbReference>
<dbReference type="FunFam" id="1.10.1420.10:FF:000002">
    <property type="entry name" value="DNA mismatch repair protein MutS"/>
    <property type="match status" value="1"/>
</dbReference>
<dbReference type="FunFam" id="3.30.420.110:FF:000001">
    <property type="entry name" value="DNA mismatch repair protein MutS"/>
    <property type="match status" value="1"/>
</dbReference>
<dbReference type="FunFam" id="3.40.1170.10:FF:000001">
    <property type="entry name" value="DNA mismatch repair protein MutS"/>
    <property type="match status" value="1"/>
</dbReference>
<dbReference type="FunFam" id="3.40.50.300:FF:000283">
    <property type="entry name" value="DNA mismatch repair protein MutS"/>
    <property type="match status" value="1"/>
</dbReference>
<dbReference type="Gene3D" id="1.10.1420.10">
    <property type="match status" value="2"/>
</dbReference>
<dbReference type="Gene3D" id="6.10.140.430">
    <property type="match status" value="1"/>
</dbReference>
<dbReference type="Gene3D" id="3.40.1170.10">
    <property type="entry name" value="DNA repair protein MutS, domain I"/>
    <property type="match status" value="1"/>
</dbReference>
<dbReference type="Gene3D" id="3.30.420.110">
    <property type="entry name" value="MutS, connector domain"/>
    <property type="match status" value="1"/>
</dbReference>
<dbReference type="Gene3D" id="3.40.50.300">
    <property type="entry name" value="P-loop containing nucleotide triphosphate hydrolases"/>
    <property type="match status" value="1"/>
</dbReference>
<dbReference type="HAMAP" id="MF_00096">
    <property type="entry name" value="MutS"/>
    <property type="match status" value="1"/>
</dbReference>
<dbReference type="InterPro" id="IPR005748">
    <property type="entry name" value="DNA_mismatch_repair_MutS"/>
</dbReference>
<dbReference type="InterPro" id="IPR007695">
    <property type="entry name" value="DNA_mismatch_repair_MutS-lik_N"/>
</dbReference>
<dbReference type="InterPro" id="IPR017261">
    <property type="entry name" value="DNA_mismatch_repair_MutS/MSH"/>
</dbReference>
<dbReference type="InterPro" id="IPR000432">
    <property type="entry name" value="DNA_mismatch_repair_MutS_C"/>
</dbReference>
<dbReference type="InterPro" id="IPR007861">
    <property type="entry name" value="DNA_mismatch_repair_MutS_clamp"/>
</dbReference>
<dbReference type="InterPro" id="IPR007696">
    <property type="entry name" value="DNA_mismatch_repair_MutS_core"/>
</dbReference>
<dbReference type="InterPro" id="IPR016151">
    <property type="entry name" value="DNA_mismatch_repair_MutS_N"/>
</dbReference>
<dbReference type="InterPro" id="IPR036187">
    <property type="entry name" value="DNA_mismatch_repair_MutS_sf"/>
</dbReference>
<dbReference type="InterPro" id="IPR007860">
    <property type="entry name" value="DNA_mmatch_repair_MutS_con_dom"/>
</dbReference>
<dbReference type="InterPro" id="IPR045076">
    <property type="entry name" value="MutS"/>
</dbReference>
<dbReference type="InterPro" id="IPR036678">
    <property type="entry name" value="MutS_con_dom_sf"/>
</dbReference>
<dbReference type="InterPro" id="IPR027417">
    <property type="entry name" value="P-loop_NTPase"/>
</dbReference>
<dbReference type="NCBIfam" id="TIGR01070">
    <property type="entry name" value="mutS1"/>
    <property type="match status" value="1"/>
</dbReference>
<dbReference type="NCBIfam" id="NF003810">
    <property type="entry name" value="PRK05399.1"/>
    <property type="match status" value="1"/>
</dbReference>
<dbReference type="PANTHER" id="PTHR11361:SF34">
    <property type="entry name" value="DNA MISMATCH REPAIR PROTEIN MSH1, MITOCHONDRIAL"/>
    <property type="match status" value="1"/>
</dbReference>
<dbReference type="PANTHER" id="PTHR11361">
    <property type="entry name" value="DNA MISMATCH REPAIR PROTEIN MUTS FAMILY MEMBER"/>
    <property type="match status" value="1"/>
</dbReference>
<dbReference type="Pfam" id="PF01624">
    <property type="entry name" value="MutS_I"/>
    <property type="match status" value="1"/>
</dbReference>
<dbReference type="Pfam" id="PF05188">
    <property type="entry name" value="MutS_II"/>
    <property type="match status" value="1"/>
</dbReference>
<dbReference type="Pfam" id="PF05192">
    <property type="entry name" value="MutS_III"/>
    <property type="match status" value="1"/>
</dbReference>
<dbReference type="Pfam" id="PF05190">
    <property type="entry name" value="MutS_IV"/>
    <property type="match status" value="1"/>
</dbReference>
<dbReference type="Pfam" id="PF00488">
    <property type="entry name" value="MutS_V"/>
    <property type="match status" value="1"/>
</dbReference>
<dbReference type="PIRSF" id="PIRSF037677">
    <property type="entry name" value="DNA_mis_repair_Msh6"/>
    <property type="match status" value="1"/>
</dbReference>
<dbReference type="SMART" id="SM00534">
    <property type="entry name" value="MUTSac"/>
    <property type="match status" value="1"/>
</dbReference>
<dbReference type="SMART" id="SM00533">
    <property type="entry name" value="MUTSd"/>
    <property type="match status" value="1"/>
</dbReference>
<dbReference type="SUPFAM" id="SSF55271">
    <property type="entry name" value="DNA repair protein MutS, domain I"/>
    <property type="match status" value="1"/>
</dbReference>
<dbReference type="SUPFAM" id="SSF53150">
    <property type="entry name" value="DNA repair protein MutS, domain II"/>
    <property type="match status" value="1"/>
</dbReference>
<dbReference type="SUPFAM" id="SSF48334">
    <property type="entry name" value="DNA repair protein MutS, domain III"/>
    <property type="match status" value="1"/>
</dbReference>
<dbReference type="SUPFAM" id="SSF52540">
    <property type="entry name" value="P-loop containing nucleoside triphosphate hydrolases"/>
    <property type="match status" value="1"/>
</dbReference>
<dbReference type="PROSITE" id="PS00486">
    <property type="entry name" value="DNA_MISMATCH_REPAIR_2"/>
    <property type="match status" value="1"/>
</dbReference>
<protein>
    <recommendedName>
        <fullName evidence="1">DNA mismatch repair protein MutS</fullName>
    </recommendedName>
</protein>
<gene>
    <name evidence="1" type="primary">mutS</name>
    <name type="ordered locus">SF2752</name>
    <name type="ordered locus">S2944</name>
</gene>
<accession>Q83QE9</accession>
<sequence length="853" mass="95277">MSAIENFDAHTPMMQQYLKLKAQHPEILLFYRMGDFYELFYDDAKRASQLLDISLTKRGASAGEPIPMAGIPYHAVENYLAKLVNQGESVAICEQIGDPATSKGPVERKVVRIVTPGTISDEALLQERQDNLLAAIWQDSKGFGYATLDISSGRFRLSEPADRETMAAELQRSNPAELLYAEDFAEMSLIEGRRGLRRRPLWEFEIDTARQQLNLQFGTRDLVGFGVENAPRGLCAAGCLLQYAKDTQRTTLPHIRSITMEREQDSIIMDAATRRNLEITQNLAGGAENTLASVLDCTVTPMGSRMLKRWLHMPVRDTRVLLERQQTIGALQDFTAELQPVLRQVGDLERILARLALRTARPRDLARMRHAFQQLPELRAQLETVDSAPVQALREKMGEFAELRDLLERAIIDTPPVLVRDGGVIASGYNEELDEWRALADGATDYLERLEVRERERTGLDTLKVGFNAVHGYYIQISRGQSHLAPINYMRRQTLKNAERYIIPELKEYEDKVLTSKGKALALEKQLYEELFDLLLPHLEALQQSASALAELDVLVNLAERAYTLNYTCPTFIDKPGIRITEGRHPVVEQVLNEPFIANPLNLSPQRRMLIITGPNMGGKSTYMRQTALIALMAYIGSYVPAQKVEIGPIDRIFTRVGAADDLASGRSTFMVEMTETANILHNATEYSLVLMDEIGRGTSTYDGLSLAWACAENLANKIKALTLFATHYFELTQLPEKMEGVANVHLDALEHGDTIAFMHSVQDGAASKSYGLAVAALAGVPKEVIKRARQKLRELESISPNAAATQVDGTQMSLLSVPEETSPAVEALENLDPDSLTPRQALEWIYRLKSLV</sequence>
<name>MUTS_SHIFL</name>
<organism>
    <name type="scientific">Shigella flexneri</name>
    <dbReference type="NCBI Taxonomy" id="623"/>
    <lineage>
        <taxon>Bacteria</taxon>
        <taxon>Pseudomonadati</taxon>
        <taxon>Pseudomonadota</taxon>
        <taxon>Gammaproteobacteria</taxon>
        <taxon>Enterobacterales</taxon>
        <taxon>Enterobacteriaceae</taxon>
        <taxon>Shigella</taxon>
    </lineage>
</organism>
<reference key="1">
    <citation type="journal article" date="2002" name="Nucleic Acids Res.">
        <title>Genome sequence of Shigella flexneri 2a: insights into pathogenicity through comparison with genomes of Escherichia coli K12 and O157.</title>
        <authorList>
            <person name="Jin Q."/>
            <person name="Yuan Z."/>
            <person name="Xu J."/>
            <person name="Wang Y."/>
            <person name="Shen Y."/>
            <person name="Lu W."/>
            <person name="Wang J."/>
            <person name="Liu H."/>
            <person name="Yang J."/>
            <person name="Yang F."/>
            <person name="Zhang X."/>
            <person name="Zhang J."/>
            <person name="Yang G."/>
            <person name="Wu H."/>
            <person name="Qu D."/>
            <person name="Dong J."/>
            <person name="Sun L."/>
            <person name="Xue Y."/>
            <person name="Zhao A."/>
            <person name="Gao Y."/>
            <person name="Zhu J."/>
            <person name="Kan B."/>
            <person name="Ding K."/>
            <person name="Chen S."/>
            <person name="Cheng H."/>
            <person name="Yao Z."/>
            <person name="He B."/>
            <person name="Chen R."/>
            <person name="Ma D."/>
            <person name="Qiang B."/>
            <person name="Wen Y."/>
            <person name="Hou Y."/>
            <person name="Yu J."/>
        </authorList>
    </citation>
    <scope>NUCLEOTIDE SEQUENCE [LARGE SCALE GENOMIC DNA]</scope>
    <source>
        <strain>301 / Serotype 2a</strain>
    </source>
</reference>
<reference key="2">
    <citation type="journal article" date="2003" name="Infect. Immun.">
        <title>Complete genome sequence and comparative genomics of Shigella flexneri serotype 2a strain 2457T.</title>
        <authorList>
            <person name="Wei J."/>
            <person name="Goldberg M.B."/>
            <person name="Burland V."/>
            <person name="Venkatesan M.M."/>
            <person name="Deng W."/>
            <person name="Fournier G."/>
            <person name="Mayhew G.F."/>
            <person name="Plunkett G. III"/>
            <person name="Rose D.J."/>
            <person name="Darling A."/>
            <person name="Mau B."/>
            <person name="Perna N.T."/>
            <person name="Payne S.M."/>
            <person name="Runyen-Janecky L.J."/>
            <person name="Zhou S."/>
            <person name="Schwartz D.C."/>
            <person name="Blattner F.R."/>
        </authorList>
    </citation>
    <scope>NUCLEOTIDE SEQUENCE [LARGE SCALE GENOMIC DNA]</scope>
    <source>
        <strain>ATCC 700930 / 2457T / Serotype 2a</strain>
    </source>
</reference>
<comment type="function">
    <text evidence="1">This protein is involved in the repair of mismatches in DNA. It is possible that it carries out the mismatch recognition step. This protein has a weak ATPase activity.</text>
</comment>
<comment type="similarity">
    <text evidence="1">Belongs to the DNA mismatch repair MutS family.</text>
</comment>
<evidence type="ECO:0000255" key="1">
    <source>
        <dbReference type="HAMAP-Rule" id="MF_00096"/>
    </source>
</evidence>
<feature type="chain" id="PRO_0000115134" description="DNA mismatch repair protein MutS">
    <location>
        <begin position="1"/>
        <end position="853"/>
    </location>
</feature>
<feature type="binding site" evidence="1">
    <location>
        <begin position="614"/>
        <end position="621"/>
    </location>
    <ligand>
        <name>ATP</name>
        <dbReference type="ChEBI" id="CHEBI:30616"/>
    </ligand>
</feature>
<proteinExistence type="inferred from homology"/>